<evidence type="ECO:0000250" key="1">
    <source>
        <dbReference type="UniProtKB" id="Q9D3A9"/>
    </source>
</evidence>
<evidence type="ECO:0000250" key="2">
    <source>
        <dbReference type="UniProtKB" id="Q9H313"/>
    </source>
</evidence>
<evidence type="ECO:0000255" key="3"/>
<evidence type="ECO:0000256" key="4">
    <source>
        <dbReference type="SAM" id="MobiDB-lite"/>
    </source>
</evidence>
<evidence type="ECO:0000269" key="5">
    <source>
    </source>
</evidence>
<evidence type="ECO:0000305" key="6"/>
<reference key="1">
    <citation type="journal article" date="2004" name="Nature">
        <title>Genome sequence of the Brown Norway rat yields insights into mammalian evolution.</title>
        <authorList>
            <person name="Gibbs R.A."/>
            <person name="Weinstock G.M."/>
            <person name="Metzker M.L."/>
            <person name="Muzny D.M."/>
            <person name="Sodergren E.J."/>
            <person name="Scherer S."/>
            <person name="Scott G."/>
            <person name="Steffen D."/>
            <person name="Worley K.C."/>
            <person name="Burch P.E."/>
            <person name="Okwuonu G."/>
            <person name="Hines S."/>
            <person name="Lewis L."/>
            <person name="Deramo C."/>
            <person name="Delgado O."/>
            <person name="Dugan-Rocha S."/>
            <person name="Miner G."/>
            <person name="Morgan M."/>
            <person name="Hawes A."/>
            <person name="Gill R."/>
            <person name="Holt R.A."/>
            <person name="Adams M.D."/>
            <person name="Amanatides P.G."/>
            <person name="Baden-Tillson H."/>
            <person name="Barnstead M."/>
            <person name="Chin S."/>
            <person name="Evans C.A."/>
            <person name="Ferriera S."/>
            <person name="Fosler C."/>
            <person name="Glodek A."/>
            <person name="Gu Z."/>
            <person name="Jennings D."/>
            <person name="Kraft C.L."/>
            <person name="Nguyen T."/>
            <person name="Pfannkoch C.M."/>
            <person name="Sitter C."/>
            <person name="Sutton G.G."/>
            <person name="Venter J.C."/>
            <person name="Woodage T."/>
            <person name="Smith D."/>
            <person name="Lee H.-M."/>
            <person name="Gustafson E."/>
            <person name="Cahill P."/>
            <person name="Kana A."/>
            <person name="Doucette-Stamm L."/>
            <person name="Weinstock K."/>
            <person name="Fechtel K."/>
            <person name="Weiss R.B."/>
            <person name="Dunn D.M."/>
            <person name="Green E.D."/>
            <person name="Blakesley R.W."/>
            <person name="Bouffard G.G."/>
            <person name="De Jong P.J."/>
            <person name="Osoegawa K."/>
            <person name="Zhu B."/>
            <person name="Marra M."/>
            <person name="Schein J."/>
            <person name="Bosdet I."/>
            <person name="Fjell C."/>
            <person name="Jones S."/>
            <person name="Krzywinski M."/>
            <person name="Mathewson C."/>
            <person name="Siddiqui A."/>
            <person name="Wye N."/>
            <person name="McPherson J."/>
            <person name="Zhao S."/>
            <person name="Fraser C.M."/>
            <person name="Shetty J."/>
            <person name="Shatsman S."/>
            <person name="Geer K."/>
            <person name="Chen Y."/>
            <person name="Abramzon S."/>
            <person name="Nierman W.C."/>
            <person name="Havlak P.H."/>
            <person name="Chen R."/>
            <person name="Durbin K.J."/>
            <person name="Egan A."/>
            <person name="Ren Y."/>
            <person name="Song X.-Z."/>
            <person name="Li B."/>
            <person name="Liu Y."/>
            <person name="Qin X."/>
            <person name="Cawley S."/>
            <person name="Cooney A.J."/>
            <person name="D'Souza L.M."/>
            <person name="Martin K."/>
            <person name="Wu J.Q."/>
            <person name="Gonzalez-Garay M.L."/>
            <person name="Jackson A.R."/>
            <person name="Kalafus K.J."/>
            <person name="McLeod M.P."/>
            <person name="Milosavljevic A."/>
            <person name="Virk D."/>
            <person name="Volkov A."/>
            <person name="Wheeler D.A."/>
            <person name="Zhang Z."/>
            <person name="Bailey J.A."/>
            <person name="Eichler E.E."/>
            <person name="Tuzun E."/>
            <person name="Birney E."/>
            <person name="Mongin E."/>
            <person name="Ureta-Vidal A."/>
            <person name="Woodwark C."/>
            <person name="Zdobnov E."/>
            <person name="Bork P."/>
            <person name="Suyama M."/>
            <person name="Torrents D."/>
            <person name="Alexandersson M."/>
            <person name="Trask B.J."/>
            <person name="Young J.M."/>
            <person name="Huang H."/>
            <person name="Wang H."/>
            <person name="Xing H."/>
            <person name="Daniels S."/>
            <person name="Gietzen D."/>
            <person name="Schmidt J."/>
            <person name="Stevens K."/>
            <person name="Vitt U."/>
            <person name="Wingrove J."/>
            <person name="Camara F."/>
            <person name="Mar Alba M."/>
            <person name="Abril J.F."/>
            <person name="Guigo R."/>
            <person name="Smit A."/>
            <person name="Dubchak I."/>
            <person name="Rubin E.M."/>
            <person name="Couronne O."/>
            <person name="Poliakov A."/>
            <person name="Huebner N."/>
            <person name="Ganten D."/>
            <person name="Goesele C."/>
            <person name="Hummel O."/>
            <person name="Kreitler T."/>
            <person name="Lee Y.-A."/>
            <person name="Monti J."/>
            <person name="Schulz H."/>
            <person name="Zimdahl H."/>
            <person name="Himmelbauer H."/>
            <person name="Lehrach H."/>
            <person name="Jacob H.J."/>
            <person name="Bromberg S."/>
            <person name="Gullings-Handley J."/>
            <person name="Jensen-Seaman M.I."/>
            <person name="Kwitek A.E."/>
            <person name="Lazar J."/>
            <person name="Pasko D."/>
            <person name="Tonellato P.J."/>
            <person name="Twigger S."/>
            <person name="Ponting C.P."/>
            <person name="Duarte J.M."/>
            <person name="Rice S."/>
            <person name="Goodstadt L."/>
            <person name="Beatson S.A."/>
            <person name="Emes R.D."/>
            <person name="Winter E.E."/>
            <person name="Webber C."/>
            <person name="Brandt P."/>
            <person name="Nyakatura G."/>
            <person name="Adetobi M."/>
            <person name="Chiaromonte F."/>
            <person name="Elnitski L."/>
            <person name="Eswara P."/>
            <person name="Hardison R.C."/>
            <person name="Hou M."/>
            <person name="Kolbe D."/>
            <person name="Makova K."/>
            <person name="Miller W."/>
            <person name="Nekrutenko A."/>
            <person name="Riemer C."/>
            <person name="Schwartz S."/>
            <person name="Taylor J."/>
            <person name="Yang S."/>
            <person name="Zhang Y."/>
            <person name="Lindpaintner K."/>
            <person name="Andrews T.D."/>
            <person name="Caccamo M."/>
            <person name="Clamp M."/>
            <person name="Clarke L."/>
            <person name="Curwen V."/>
            <person name="Durbin R.M."/>
            <person name="Eyras E."/>
            <person name="Searle S.M."/>
            <person name="Cooper G.M."/>
            <person name="Batzoglou S."/>
            <person name="Brudno M."/>
            <person name="Sidow A."/>
            <person name="Stone E.A."/>
            <person name="Payseur B.A."/>
            <person name="Bourque G."/>
            <person name="Lopez-Otin C."/>
            <person name="Puente X.S."/>
            <person name="Chakrabarti K."/>
            <person name="Chatterji S."/>
            <person name="Dewey C."/>
            <person name="Pachter L."/>
            <person name="Bray N."/>
            <person name="Yap V.B."/>
            <person name="Caspi A."/>
            <person name="Tesler G."/>
            <person name="Pevzner P.A."/>
            <person name="Haussler D."/>
            <person name="Roskin K.M."/>
            <person name="Baertsch R."/>
            <person name="Clawson H."/>
            <person name="Furey T.S."/>
            <person name="Hinrichs A.S."/>
            <person name="Karolchik D."/>
            <person name="Kent W.J."/>
            <person name="Rosenbloom K.R."/>
            <person name="Trumbower H."/>
            <person name="Weirauch M."/>
            <person name="Cooper D.N."/>
            <person name="Stenson P.D."/>
            <person name="Ma B."/>
            <person name="Brent M."/>
            <person name="Arumugam M."/>
            <person name="Shteynberg D."/>
            <person name="Copley R.R."/>
            <person name="Taylor M.S."/>
            <person name="Riethman H."/>
            <person name="Mudunuri U."/>
            <person name="Peterson J."/>
            <person name="Guyer M."/>
            <person name="Felsenfeld A."/>
            <person name="Old S."/>
            <person name="Mockrin S."/>
            <person name="Collins F.S."/>
        </authorList>
    </citation>
    <scope>NUCLEOTIDE SEQUENCE [LARGE SCALE GENOMIC DNA]</scope>
    <source>
        <strain>Brown Norway</strain>
    </source>
</reference>
<reference key="2">
    <citation type="journal article" date="2007" name="J. Neurochem.">
        <title>Expression and evolution of the mammalian brain gene Ttyh1.</title>
        <authorList>
            <person name="Matthews C.A."/>
            <person name="Shaw J.E."/>
            <person name="Hooper J.A."/>
            <person name="Young I.G."/>
            <person name="Crouch M.F."/>
            <person name="Campbell H.D."/>
        </authorList>
    </citation>
    <scope>SUBCELLULAR LOCATION</scope>
</reference>
<reference key="3">
    <citation type="journal article" date="2012" name="Nat. Commun.">
        <title>Quantitative maps of protein phosphorylation sites across 14 different rat organs and tissues.</title>
        <authorList>
            <person name="Lundby A."/>
            <person name="Secher A."/>
            <person name="Lage K."/>
            <person name="Nordsborg N.B."/>
            <person name="Dmytriyev A."/>
            <person name="Lundby C."/>
            <person name="Olsen J.V."/>
        </authorList>
    </citation>
    <scope>IDENTIFICATION BY MASS SPECTROMETRY [LARGE SCALE ANALYSIS]</scope>
</reference>
<dbReference type="EMBL" id="AABR03001833">
    <property type="status" value="NOT_ANNOTATED_CDS"/>
    <property type="molecule type" value="Genomic_DNA"/>
</dbReference>
<dbReference type="RefSeq" id="NP_001099695.1">
    <property type="nucleotide sequence ID" value="NM_001106225.1"/>
</dbReference>
<dbReference type="RefSeq" id="XP_006228278.1">
    <property type="nucleotide sequence ID" value="XM_006228216.5"/>
</dbReference>
<dbReference type="RefSeq" id="XP_063139114.1">
    <property type="nucleotide sequence ID" value="XM_063283044.1"/>
</dbReference>
<dbReference type="SMR" id="P0C5X8"/>
<dbReference type="FunCoup" id="P0C5X8">
    <property type="interactions" value="1728"/>
</dbReference>
<dbReference type="STRING" id="10116.ENSRNOP00000062088"/>
<dbReference type="GlyCosmos" id="P0C5X8">
    <property type="glycosylation" value="3 sites, No reported glycans"/>
</dbReference>
<dbReference type="GlyGen" id="P0C5X8">
    <property type="glycosylation" value="3 sites"/>
</dbReference>
<dbReference type="iPTMnet" id="P0C5X8"/>
<dbReference type="PhosphoSitePlus" id="P0C5X8"/>
<dbReference type="SwissPalm" id="P0C5X8"/>
<dbReference type="PaxDb" id="10116-ENSRNOP00000062088"/>
<dbReference type="Ensembl" id="ENSRNOT00000068459.4">
    <property type="protein sequence ID" value="ENSRNOP00000062088.1"/>
    <property type="gene ID" value="ENSRNOG00000032699.6"/>
</dbReference>
<dbReference type="GeneID" id="292597"/>
<dbReference type="KEGG" id="rno:292597"/>
<dbReference type="UCSC" id="RGD:1310103">
    <property type="organism name" value="rat"/>
</dbReference>
<dbReference type="AGR" id="RGD:1310103"/>
<dbReference type="CTD" id="57348"/>
<dbReference type="RGD" id="1310103">
    <property type="gene designation" value="Ttyh1"/>
</dbReference>
<dbReference type="eggNOG" id="KOG4433">
    <property type="taxonomic scope" value="Eukaryota"/>
</dbReference>
<dbReference type="GeneTree" id="ENSGT00950000183060"/>
<dbReference type="HOGENOM" id="CLU_023758_1_0_1"/>
<dbReference type="InParanoid" id="P0C5X8"/>
<dbReference type="OMA" id="DFCSEPN"/>
<dbReference type="OrthoDB" id="187568at2759"/>
<dbReference type="PhylomeDB" id="P0C5X8"/>
<dbReference type="Reactome" id="R-RNO-2672351">
    <property type="pathway name" value="Stimuli-sensing channels"/>
</dbReference>
<dbReference type="PRO" id="PR:P0C5X8"/>
<dbReference type="Proteomes" id="UP000002494">
    <property type="component" value="Chromosome 1"/>
</dbReference>
<dbReference type="Bgee" id="ENSRNOG00000032699">
    <property type="expression patterns" value="Expressed in Ammon's horn and 20 other cell types or tissues"/>
</dbReference>
<dbReference type="ExpressionAtlas" id="P0C5X8">
    <property type="expression patterns" value="baseline and differential"/>
</dbReference>
<dbReference type="GO" id="GO:0034707">
    <property type="term" value="C:chloride channel complex"/>
    <property type="evidence" value="ECO:0007669"/>
    <property type="project" value="UniProtKB-KW"/>
</dbReference>
<dbReference type="GO" id="GO:0031527">
    <property type="term" value="C:filopodium membrane"/>
    <property type="evidence" value="ECO:0000266"/>
    <property type="project" value="RGD"/>
</dbReference>
<dbReference type="GO" id="GO:0032433">
    <property type="term" value="C:filopodium tip"/>
    <property type="evidence" value="ECO:0000266"/>
    <property type="project" value="RGD"/>
</dbReference>
<dbReference type="GO" id="GO:0016020">
    <property type="term" value="C:membrane"/>
    <property type="evidence" value="ECO:0000266"/>
    <property type="project" value="RGD"/>
</dbReference>
<dbReference type="GO" id="GO:0005886">
    <property type="term" value="C:plasma membrane"/>
    <property type="evidence" value="ECO:0000266"/>
    <property type="project" value="RGD"/>
</dbReference>
<dbReference type="GO" id="GO:0030868">
    <property type="term" value="C:smooth endoplasmic reticulum membrane"/>
    <property type="evidence" value="ECO:0000266"/>
    <property type="project" value="RGD"/>
</dbReference>
<dbReference type="GO" id="GO:0045202">
    <property type="term" value="C:synapse"/>
    <property type="evidence" value="ECO:0000266"/>
    <property type="project" value="RGD"/>
</dbReference>
<dbReference type="GO" id="GO:0005509">
    <property type="term" value="F:calcium ion binding"/>
    <property type="evidence" value="ECO:0000266"/>
    <property type="project" value="RGD"/>
</dbReference>
<dbReference type="GO" id="GO:0005229">
    <property type="term" value="F:intracellularly calcium-gated chloride channel activity"/>
    <property type="evidence" value="ECO:0000318"/>
    <property type="project" value="GO_Central"/>
</dbReference>
<dbReference type="GO" id="GO:0072320">
    <property type="term" value="F:volume-sensitive chloride channel activity"/>
    <property type="evidence" value="ECO:0000250"/>
    <property type="project" value="UniProtKB"/>
</dbReference>
<dbReference type="GO" id="GO:0000902">
    <property type="term" value="P:cell morphogenesis"/>
    <property type="evidence" value="ECO:0000266"/>
    <property type="project" value="RGD"/>
</dbReference>
<dbReference type="GO" id="GO:0098609">
    <property type="term" value="P:cell-cell adhesion"/>
    <property type="evidence" value="ECO:0000266"/>
    <property type="project" value="RGD"/>
</dbReference>
<dbReference type="GO" id="GO:0031589">
    <property type="term" value="P:cell-substrate adhesion"/>
    <property type="evidence" value="ECO:0000266"/>
    <property type="project" value="RGD"/>
</dbReference>
<dbReference type="GO" id="GO:0006821">
    <property type="term" value="P:chloride transport"/>
    <property type="evidence" value="ECO:0000266"/>
    <property type="project" value="RGD"/>
</dbReference>
<dbReference type="GO" id="GO:0046847">
    <property type="term" value="P:filopodium assembly"/>
    <property type="evidence" value="ECO:0000266"/>
    <property type="project" value="RGD"/>
</dbReference>
<dbReference type="GO" id="GO:0010467">
    <property type="term" value="P:gene expression"/>
    <property type="evidence" value="ECO:0000266"/>
    <property type="project" value="RGD"/>
</dbReference>
<dbReference type="GO" id="GO:0015813">
    <property type="term" value="P:L-glutamate transmembrane transport"/>
    <property type="evidence" value="ECO:0000250"/>
    <property type="project" value="UniProtKB"/>
</dbReference>
<dbReference type="GO" id="GO:0000278">
    <property type="term" value="P:mitotic cell cycle"/>
    <property type="evidence" value="ECO:0000266"/>
    <property type="project" value="RGD"/>
</dbReference>
<dbReference type="GO" id="GO:0022008">
    <property type="term" value="P:neurogenesis"/>
    <property type="evidence" value="ECO:0000266"/>
    <property type="project" value="RGD"/>
</dbReference>
<dbReference type="GO" id="GO:0007219">
    <property type="term" value="P:Notch signaling pathway"/>
    <property type="evidence" value="ECO:0000266"/>
    <property type="project" value="RGD"/>
</dbReference>
<dbReference type="GO" id="GO:0048863">
    <property type="term" value="P:stem cell differentiation"/>
    <property type="evidence" value="ECO:0000266"/>
    <property type="project" value="RGD"/>
</dbReference>
<dbReference type="GO" id="GO:0072089">
    <property type="term" value="P:stem cell proliferation"/>
    <property type="evidence" value="ECO:0000266"/>
    <property type="project" value="RGD"/>
</dbReference>
<dbReference type="CDD" id="cd07912">
    <property type="entry name" value="Tweety_N"/>
    <property type="match status" value="1"/>
</dbReference>
<dbReference type="InterPro" id="IPR006990">
    <property type="entry name" value="Tweety"/>
</dbReference>
<dbReference type="PANTHER" id="PTHR12424:SF5">
    <property type="entry name" value="PROTEIN TWEETY HOMOLOG 1"/>
    <property type="match status" value="1"/>
</dbReference>
<dbReference type="PANTHER" id="PTHR12424">
    <property type="entry name" value="TWEETY-RELATED"/>
    <property type="match status" value="1"/>
</dbReference>
<dbReference type="Pfam" id="PF04906">
    <property type="entry name" value="Tweety"/>
    <property type="match status" value="1"/>
</dbReference>
<feature type="chain" id="PRO_0000312242" description="Protein tweety homolog 1">
    <location>
        <begin position="1"/>
        <end position="450"/>
    </location>
</feature>
<feature type="topological domain" description="Extracellular" evidence="2">
    <location>
        <begin position="1"/>
        <end position="43"/>
    </location>
</feature>
<feature type="transmembrane region" description="Helical; Name=1" evidence="3">
    <location>
        <begin position="44"/>
        <end position="64"/>
    </location>
</feature>
<feature type="topological domain" description="Cytoplasmic" evidence="2">
    <location>
        <begin position="65"/>
        <end position="88"/>
    </location>
</feature>
<feature type="transmembrane region" description="Helical; Name=2" evidence="3">
    <location>
        <begin position="89"/>
        <end position="109"/>
    </location>
</feature>
<feature type="topological domain" description="Extracellular" evidence="2">
    <location>
        <begin position="110"/>
        <end position="214"/>
    </location>
</feature>
<feature type="transmembrane region" description="Helical; Name=3" evidence="3">
    <location>
        <begin position="215"/>
        <end position="235"/>
    </location>
</feature>
<feature type="topological domain" description="Cytoplasmic" evidence="2">
    <location>
        <begin position="236"/>
        <end position="240"/>
    </location>
</feature>
<feature type="transmembrane region" description="Helical; Name=4" evidence="3">
    <location>
        <begin position="241"/>
        <end position="261"/>
    </location>
</feature>
<feature type="topological domain" description="Extracellular" evidence="2">
    <location>
        <begin position="262"/>
        <end position="390"/>
    </location>
</feature>
<feature type="transmembrane region" description="Helical; Name=5" evidence="3">
    <location>
        <begin position="391"/>
        <end position="411"/>
    </location>
</feature>
<feature type="topological domain" description="Cytoplasmic" evidence="2">
    <location>
        <begin position="412"/>
        <end position="450"/>
    </location>
</feature>
<feature type="region of interest" description="Disordered" evidence="4">
    <location>
        <begin position="428"/>
        <end position="450"/>
    </location>
</feature>
<feature type="site" description="Essential for the formation of the channel-pore" evidence="1">
    <location>
        <position position="165"/>
    </location>
</feature>
<feature type="modified residue" description="Phosphoserine" evidence="1">
    <location>
        <position position="440"/>
    </location>
</feature>
<feature type="glycosylation site" description="N-linked (GlcNAc...) asparagine" evidence="3">
    <location>
        <position position="130"/>
    </location>
</feature>
<feature type="glycosylation site" description="N-linked (GlcNAc...) asparagine" evidence="3">
    <location>
        <position position="284"/>
    </location>
</feature>
<feature type="glycosylation site" description="N-linked (GlcNAc...) asparagine" evidence="3">
    <location>
        <position position="355"/>
    </location>
</feature>
<feature type="disulfide bond" evidence="2">
    <location>
        <begin position="275"/>
        <end position="385"/>
    </location>
</feature>
<feature type="disulfide bond" evidence="2">
    <location>
        <begin position="303"/>
        <end position="370"/>
    </location>
</feature>
<proteinExistence type="evidence at protein level"/>
<keyword id="KW-0130">Cell adhesion</keyword>
<keyword id="KW-1003">Cell membrane</keyword>
<keyword id="KW-0868">Chloride</keyword>
<keyword id="KW-0869">Chloride channel</keyword>
<keyword id="KW-1015">Disulfide bond</keyword>
<keyword id="KW-0325">Glycoprotein</keyword>
<keyword id="KW-0407">Ion channel</keyword>
<keyword id="KW-0406">Ion transport</keyword>
<keyword id="KW-0472">Membrane</keyword>
<keyword id="KW-0597">Phosphoprotein</keyword>
<keyword id="KW-1185">Reference proteome</keyword>
<keyword id="KW-0812">Transmembrane</keyword>
<keyword id="KW-1133">Transmembrane helix</keyword>
<keyword id="KW-0813">Transport</keyword>
<organism>
    <name type="scientific">Rattus norvegicus</name>
    <name type="common">Rat</name>
    <dbReference type="NCBI Taxonomy" id="10116"/>
    <lineage>
        <taxon>Eukaryota</taxon>
        <taxon>Metazoa</taxon>
        <taxon>Chordata</taxon>
        <taxon>Craniata</taxon>
        <taxon>Vertebrata</taxon>
        <taxon>Euteleostomi</taxon>
        <taxon>Mammalia</taxon>
        <taxon>Eutheria</taxon>
        <taxon>Euarchontoglires</taxon>
        <taxon>Glires</taxon>
        <taxon>Rodentia</taxon>
        <taxon>Myomorpha</taxon>
        <taxon>Muroidea</taxon>
        <taxon>Muridae</taxon>
        <taxon>Murinae</taxon>
        <taxon>Rattus</taxon>
    </lineage>
</organism>
<name>TTYH1_RAT</name>
<accession>P0C5X8</accession>
<comment type="function">
    <text evidence="1">Calcium-independent, swelling-dependent volume-regulated anion channel (VRAC-swell) which plays a pivotal role in the process of regulatory volume decrease (RVD) in the brain through the efflux of anions like chloride and organic osmolytes like glutamate.</text>
</comment>
<comment type="catalytic activity">
    <reaction evidence="1">
        <text>chloride(in) = chloride(out)</text>
        <dbReference type="Rhea" id="RHEA:29823"/>
        <dbReference type="ChEBI" id="CHEBI:17996"/>
    </reaction>
</comment>
<comment type="catalytic activity">
    <reaction evidence="1">
        <text>L-glutamate(out) = L-glutamate(in)</text>
        <dbReference type="Rhea" id="RHEA:66336"/>
        <dbReference type="ChEBI" id="CHEBI:29985"/>
    </reaction>
    <physiologicalReaction direction="right-to-left" evidence="1">
        <dbReference type="Rhea" id="RHEA:66338"/>
    </physiologicalReaction>
</comment>
<comment type="subunit">
    <text evidence="1 2">Homotetramer; disulfide-linked. Homodimer.</text>
</comment>
<comment type="subcellular location">
    <subcellularLocation>
        <location evidence="5">Cell membrane</location>
        <topology evidence="3">Multi-pass membrane protein</topology>
    </subcellularLocation>
</comment>
<comment type="PTM">
    <text evidence="2">N-glycosylated. Contains high-mannose, hybrid and complex oligosaccharides.</text>
</comment>
<comment type="similarity">
    <text evidence="6">Belongs to the tweety family.</text>
</comment>
<sequence length="450" mass="49032">MGAPPGYRPSAWVHLLHQLPRADFQLRPVPSGFAPRDQEYQQALLLVAALAGLGLGLSLIFIAVYLIRFCCCRPPEPPGAKSPPPGGGCVTWSCIAALLVGCAGIGIGFYGNSETSDGVSQLSSALQHANHTLSTIDDLVLETVERLGEAVRTELTTLEEVLSERVELVAATRGARRQAEAAAQHLQGLAFWQGVSLSPVQVAEDVTFVEEYRWLAYVLLLLLVLLVCLFTLLGLAKQSKWLVVVMTAMSLLVLVLSWGSMGLEAATAVGLSDFCSNPDTYVLNLTQEETGISSDILNYYFLCNQAVSNPFQQRLTLSQRALASIHSQLQGLEREASPQFPAAQKPLLSLEETLNVTERSFHQLVALLHCRSLHKDYGSALRGLCEDALEGLLFLMLFSLLSAGALATTLCSLPRAWALFPPSDDYDDTDDDDPFNPQESKRFVQWQSSI</sequence>
<protein>
    <recommendedName>
        <fullName>Protein tweety homolog 1</fullName>
    </recommendedName>
    <alternativeName>
        <fullName evidence="1">Volume-regulated anion channel subunit Ttyh1</fullName>
    </alternativeName>
</protein>
<gene>
    <name type="primary">Ttyh1</name>
</gene>